<feature type="chain" id="PRO_0000432257" description="4-hydroxyproline 2-epimerase">
    <location>
        <begin position="1"/>
        <end position="337"/>
    </location>
</feature>
<feature type="active site" description="Proton acceptor" evidence="1">
    <location>
        <position position="91"/>
    </location>
</feature>
<feature type="binding site" evidence="1">
    <location>
        <begin position="92"/>
        <end position="93"/>
    </location>
    <ligand>
        <name>substrate</name>
    </ligand>
</feature>
<feature type="binding site" evidence="1">
    <location>
        <position position="252"/>
    </location>
    <ligand>
        <name>substrate</name>
    </ligand>
</feature>
<feature type="binding site" evidence="1">
    <location>
        <begin position="257"/>
        <end position="258"/>
    </location>
    <ligand>
        <name>substrate</name>
    </ligand>
</feature>
<proteinExistence type="evidence at protein level"/>
<protein>
    <recommendedName>
        <fullName evidence="3">4-hydroxyproline 2-epimerase</fullName>
        <shortName>4Hyp 2-epimerase</shortName>
        <shortName evidence="3">4HypE</shortName>
        <ecNumber evidence="2">5.1.1.8</ecNumber>
    </recommendedName>
</protein>
<accession>Q3IWG2</accession>
<name>4HYPE_CERS4</name>
<sequence>MRVQDVYNVIYTHTEGEPLCIIYSGVPYPAGSTILEKRAFLEENYDWLRKALMREPRGHADMFGVFLTPPSSRDYDAGLIYIDGKEYSHMCGHGTIAVAMAMVANGLVARDPSGLTRIRFETTAGLVVAEVAHEGDRVLWTRFENVPAYVAAQDIAFELPGYGPLKADLVWGGNYFGIIDLRGTSLRIAPENGSELSRMGLIAREEIRKKVKVQHPTEAHINNLNFVTFWHEPTIEGCLYKNVHVFSAGQLDRSPGGTGTSAMMAYFEARGVIGLNQPITSEGLLGSGTFEGCLIGETTLGTVRAVRPTVKGTAGMLGTASWTINREDPVDAGFLVL</sequence>
<reference key="1">
    <citation type="submission" date="2005-09" db="EMBL/GenBank/DDBJ databases">
        <title>Complete sequence of chromosome 2 of Rhodobacter sphaeroides 2.4.1.</title>
        <authorList>
            <person name="Copeland A."/>
            <person name="Lucas S."/>
            <person name="Lapidus A."/>
            <person name="Barry K."/>
            <person name="Detter J.C."/>
            <person name="Glavina T."/>
            <person name="Hammon N."/>
            <person name="Israni S."/>
            <person name="Pitluck S."/>
            <person name="Richardson P."/>
            <person name="Mackenzie C."/>
            <person name="Choudhary M."/>
            <person name="Larimer F."/>
            <person name="Hauser L.J."/>
            <person name="Land M."/>
            <person name="Donohue T.J."/>
            <person name="Kaplan S."/>
        </authorList>
    </citation>
    <scope>NUCLEOTIDE SEQUENCE [LARGE SCALE GENOMIC DNA]</scope>
    <source>
        <strain>ATCC 17023 / DSM 158 / JCM 6121 / CCUG 31486 / LMG 2827 / NBRC 12203 / NCIMB 8253 / ATH 2.4.1.</strain>
    </source>
</reference>
<reference key="2">
    <citation type="journal article" date="2014" name="Elife">
        <title>Prediction and characterization of enzymatic activities guided by sequence similarity and genome neighborhood networks.</title>
        <authorList>
            <person name="Zhao S."/>
            <person name="Sakai A."/>
            <person name="Zhang X."/>
            <person name="Vetting M.W."/>
            <person name="Kumar R."/>
            <person name="Hillerich B."/>
            <person name="San Francisco B."/>
            <person name="Solbiati J."/>
            <person name="Steves A."/>
            <person name="Brown S."/>
            <person name="Akiva E."/>
            <person name="Barber A."/>
            <person name="Seidel R.D."/>
            <person name="Babbitt P.C."/>
            <person name="Almo S.C."/>
            <person name="Gerlt J.A."/>
            <person name="Jacobson M.P."/>
        </authorList>
    </citation>
    <scope>FUNCTION</scope>
    <scope>CATALYTIC ACTIVITY</scope>
    <scope>INDUCTION</scope>
    <scope>DISRUPTION PHENOTYPE</scope>
    <source>
        <strain>ATCC 17023 / DSM 158 / JCM 6121 / CCUG 31486 / LMG 2827 / NBRC 12203 / NCIMB 8253 / ATH 2.4.1.</strain>
    </source>
</reference>
<keyword id="KW-0413">Isomerase</keyword>
<keyword id="KW-1185">Reference proteome</keyword>
<evidence type="ECO:0000250" key="1">
    <source>
        <dbReference type="UniProtKB" id="Q4KGU2"/>
    </source>
</evidence>
<evidence type="ECO:0000269" key="2">
    <source>
    </source>
</evidence>
<evidence type="ECO:0000303" key="3">
    <source>
    </source>
</evidence>
<evidence type="ECO:0000305" key="4"/>
<evidence type="ECO:0000312" key="5">
    <source>
        <dbReference type="EMBL" id="ABA81122.1"/>
    </source>
</evidence>
<organism>
    <name type="scientific">Cereibacter sphaeroides (strain ATCC 17023 / DSM 158 / JCM 6121 / CCUG 31486 / LMG 2827 / NBRC 12203 / NCIMB 8253 / ATH 2.4.1.)</name>
    <name type="common">Rhodobacter sphaeroides</name>
    <dbReference type="NCBI Taxonomy" id="272943"/>
    <lineage>
        <taxon>Bacteria</taxon>
        <taxon>Pseudomonadati</taxon>
        <taxon>Pseudomonadota</taxon>
        <taxon>Alphaproteobacteria</taxon>
        <taxon>Rhodobacterales</taxon>
        <taxon>Paracoccaceae</taxon>
        <taxon>Cereibacter</taxon>
    </lineage>
</organism>
<comment type="function">
    <text evidence="2">Catalyzes the epimerization of trans-4-hydroxy-L-proline (t4LHyp) to cis-4-hydroxy-D-proline (c4DHyp). Is involved in a degradation pathway that converts t4LHyp to alpha-ketoglutarate, which allows R.sphaeroides to grow on t4LHyp as a sole carbon source. Displays no proline racemase activity.</text>
</comment>
<comment type="catalytic activity">
    <reaction evidence="2">
        <text>trans-4-hydroxy-L-proline = cis-4-hydroxy-D-proline</text>
        <dbReference type="Rhea" id="RHEA:21152"/>
        <dbReference type="ChEBI" id="CHEBI:57690"/>
        <dbReference type="ChEBI" id="CHEBI:58375"/>
        <dbReference type="EC" id="5.1.1.8"/>
    </reaction>
</comment>
<comment type="induction">
    <text evidence="2">Is up-regulated when the bacterium is grown on t4LHyp as sole carbon source.</text>
</comment>
<comment type="disruption phenotype">
    <text evidence="2">Cells lacking this gene loss their ability to grow on t4LHyp as a sole carbon source.</text>
</comment>
<comment type="similarity">
    <text evidence="4">Belongs to the proline racemase family.</text>
</comment>
<gene>
    <name evidence="4" type="ordered locus">RHOS4_35540</name>
    <name evidence="5" type="ORF">RSP_3519</name>
</gene>
<dbReference type="EC" id="5.1.1.8" evidence="2"/>
<dbReference type="EMBL" id="CP000144">
    <property type="protein sequence ID" value="ABA81122.1"/>
    <property type="molecule type" value="Genomic_DNA"/>
</dbReference>
<dbReference type="RefSeq" id="WP_011339379.1">
    <property type="nucleotide sequence ID" value="NZ_CP030272.1"/>
</dbReference>
<dbReference type="RefSeq" id="YP_355023.1">
    <property type="nucleotide sequence ID" value="NC_007494.2"/>
</dbReference>
<dbReference type="SMR" id="Q3IWG2"/>
<dbReference type="STRING" id="272943.RSP_3519"/>
<dbReference type="EnsemblBacteria" id="ABA81122">
    <property type="protein sequence ID" value="ABA81122"/>
    <property type="gene ID" value="RSP_3519"/>
</dbReference>
<dbReference type="KEGG" id="rsp:RSP_3519"/>
<dbReference type="PATRIC" id="fig|272943.9.peg.3961"/>
<dbReference type="eggNOG" id="COG3938">
    <property type="taxonomic scope" value="Bacteria"/>
</dbReference>
<dbReference type="OrthoDB" id="181267at2"/>
<dbReference type="PhylomeDB" id="Q3IWG2"/>
<dbReference type="Proteomes" id="UP000002703">
    <property type="component" value="Chromosome 2"/>
</dbReference>
<dbReference type="GO" id="GO:0047580">
    <property type="term" value="F:4-hydroxyproline epimerase activity"/>
    <property type="evidence" value="ECO:0007669"/>
    <property type="project" value="UniProtKB-EC"/>
</dbReference>
<dbReference type="Gene3D" id="3.10.310.10">
    <property type="entry name" value="Diaminopimelate Epimerase, Chain A, domain 1"/>
    <property type="match status" value="2"/>
</dbReference>
<dbReference type="InterPro" id="IPR008794">
    <property type="entry name" value="Pro_racemase_fam"/>
</dbReference>
<dbReference type="PANTHER" id="PTHR33442:SF5">
    <property type="entry name" value="BIFUNCTIONAL TRANS-3-HYDROXY-L-PROLINE DEHYDRATASE_2-EPIMERASE"/>
    <property type="match status" value="1"/>
</dbReference>
<dbReference type="PANTHER" id="PTHR33442">
    <property type="entry name" value="TRANS-3-HYDROXY-L-PROLINE DEHYDRATASE"/>
    <property type="match status" value="1"/>
</dbReference>
<dbReference type="Pfam" id="PF05544">
    <property type="entry name" value="Pro_racemase"/>
    <property type="match status" value="1"/>
</dbReference>
<dbReference type="PIRSF" id="PIRSF029792">
    <property type="entry name" value="Pro_racemase"/>
    <property type="match status" value="1"/>
</dbReference>
<dbReference type="SFLD" id="SFLDS00028">
    <property type="entry name" value="Proline_Racemase"/>
    <property type="match status" value="1"/>
</dbReference>
<dbReference type="SUPFAM" id="SSF54506">
    <property type="entry name" value="Diaminopimelate epimerase-like"/>
    <property type="match status" value="1"/>
</dbReference>